<proteinExistence type="inferred from homology"/>
<dbReference type="EC" id="7.1.1.-" evidence="1"/>
<dbReference type="EMBL" id="CP001340">
    <property type="protein sequence ID" value="ACL95483.1"/>
    <property type="molecule type" value="Genomic_DNA"/>
</dbReference>
<dbReference type="RefSeq" id="WP_010919806.1">
    <property type="nucleotide sequence ID" value="NC_011916.1"/>
</dbReference>
<dbReference type="RefSeq" id="YP_002517391.1">
    <property type="nucleotide sequence ID" value="NC_011916.1"/>
</dbReference>
<dbReference type="SMR" id="B8GWU1"/>
<dbReference type="GeneID" id="7333346"/>
<dbReference type="KEGG" id="ccs:CCNA_02018"/>
<dbReference type="PATRIC" id="fig|565050.3.peg.1976"/>
<dbReference type="HOGENOM" id="CLU_144724_2_0_5"/>
<dbReference type="OrthoDB" id="9811124at2"/>
<dbReference type="PhylomeDB" id="B8GWU1"/>
<dbReference type="Proteomes" id="UP000001364">
    <property type="component" value="Chromosome"/>
</dbReference>
<dbReference type="GO" id="GO:0030964">
    <property type="term" value="C:NADH dehydrogenase complex"/>
    <property type="evidence" value="ECO:0007669"/>
    <property type="project" value="TreeGrafter"/>
</dbReference>
<dbReference type="GO" id="GO:0005886">
    <property type="term" value="C:plasma membrane"/>
    <property type="evidence" value="ECO:0007669"/>
    <property type="project" value="UniProtKB-SubCell"/>
</dbReference>
<dbReference type="GO" id="GO:0050136">
    <property type="term" value="F:NADH:ubiquinone reductase (non-electrogenic) activity"/>
    <property type="evidence" value="ECO:0007669"/>
    <property type="project" value="UniProtKB-UniRule"/>
</dbReference>
<dbReference type="GO" id="GO:0048038">
    <property type="term" value="F:quinone binding"/>
    <property type="evidence" value="ECO:0007669"/>
    <property type="project" value="UniProtKB-KW"/>
</dbReference>
<dbReference type="GO" id="GO:0042773">
    <property type="term" value="P:ATP synthesis coupled electron transport"/>
    <property type="evidence" value="ECO:0007669"/>
    <property type="project" value="InterPro"/>
</dbReference>
<dbReference type="FunFam" id="1.10.287.3510:FF:000001">
    <property type="entry name" value="NADH-quinone oxidoreductase subunit K"/>
    <property type="match status" value="1"/>
</dbReference>
<dbReference type="Gene3D" id="1.10.287.3510">
    <property type="match status" value="1"/>
</dbReference>
<dbReference type="HAMAP" id="MF_01456">
    <property type="entry name" value="NDH1_NuoK"/>
    <property type="match status" value="1"/>
</dbReference>
<dbReference type="InterPro" id="IPR001133">
    <property type="entry name" value="NADH_UbQ_OxRdtase_chain4L/K"/>
</dbReference>
<dbReference type="InterPro" id="IPR039428">
    <property type="entry name" value="NUOK/Mnh_C1-like"/>
</dbReference>
<dbReference type="NCBIfam" id="NF004320">
    <property type="entry name" value="PRK05715.1-2"/>
    <property type="match status" value="1"/>
</dbReference>
<dbReference type="NCBIfam" id="NF004321">
    <property type="entry name" value="PRK05715.1-3"/>
    <property type="match status" value="1"/>
</dbReference>
<dbReference type="NCBIfam" id="NF004323">
    <property type="entry name" value="PRK05715.1-5"/>
    <property type="match status" value="1"/>
</dbReference>
<dbReference type="PANTHER" id="PTHR11434:SF21">
    <property type="entry name" value="NADH DEHYDROGENASE SUBUNIT 4L-RELATED"/>
    <property type="match status" value="1"/>
</dbReference>
<dbReference type="PANTHER" id="PTHR11434">
    <property type="entry name" value="NADH-UBIQUINONE OXIDOREDUCTASE SUBUNIT ND4L"/>
    <property type="match status" value="1"/>
</dbReference>
<dbReference type="Pfam" id="PF00420">
    <property type="entry name" value="Oxidored_q2"/>
    <property type="match status" value="1"/>
</dbReference>
<accession>B8GWU1</accession>
<sequence>MIGLPHYLVVAAILFTIGVFGIFVNRKNVIVILMSIELILLAVNINLVAFSAYLHDVAGQIFAMFVLTVAAAEAAVGLAILVTFFRNRGDIAVDDASMMKG</sequence>
<protein>
    <recommendedName>
        <fullName evidence="1">NADH-quinone oxidoreductase subunit K</fullName>
        <ecNumber evidence="1">7.1.1.-</ecNumber>
    </recommendedName>
    <alternativeName>
        <fullName evidence="1">NADH dehydrogenase I subunit K</fullName>
    </alternativeName>
    <alternativeName>
        <fullName evidence="1">NDH-1 subunit K</fullName>
    </alternativeName>
</protein>
<evidence type="ECO:0000255" key="1">
    <source>
        <dbReference type="HAMAP-Rule" id="MF_01456"/>
    </source>
</evidence>
<comment type="function">
    <text evidence="1">NDH-1 shuttles electrons from NADH, via FMN and iron-sulfur (Fe-S) centers, to quinones in the respiratory chain. The immediate electron acceptor for the enzyme in this species is believed to be ubiquinone. Couples the redox reaction to proton translocation (for every two electrons transferred, four hydrogen ions are translocated across the cytoplasmic membrane), and thus conserves the redox energy in a proton gradient.</text>
</comment>
<comment type="catalytic activity">
    <reaction evidence="1">
        <text>a quinone + NADH + 5 H(+)(in) = a quinol + NAD(+) + 4 H(+)(out)</text>
        <dbReference type="Rhea" id="RHEA:57888"/>
        <dbReference type="ChEBI" id="CHEBI:15378"/>
        <dbReference type="ChEBI" id="CHEBI:24646"/>
        <dbReference type="ChEBI" id="CHEBI:57540"/>
        <dbReference type="ChEBI" id="CHEBI:57945"/>
        <dbReference type="ChEBI" id="CHEBI:132124"/>
    </reaction>
</comment>
<comment type="subunit">
    <text evidence="1">NDH-1 is composed of 14 different subunits. Subunits NuoA, H, J, K, L, M, N constitute the membrane sector of the complex.</text>
</comment>
<comment type="subcellular location">
    <subcellularLocation>
        <location evidence="1">Cell inner membrane</location>
        <topology evidence="1">Multi-pass membrane protein</topology>
    </subcellularLocation>
</comment>
<comment type="similarity">
    <text evidence="1">Belongs to the complex I subunit 4L family.</text>
</comment>
<gene>
    <name evidence="1" type="primary">nuoK</name>
    <name type="ordered locus">CCNA_02018</name>
</gene>
<reference key="1">
    <citation type="journal article" date="2010" name="J. Bacteriol.">
        <title>The genetic basis of laboratory adaptation in Caulobacter crescentus.</title>
        <authorList>
            <person name="Marks M.E."/>
            <person name="Castro-Rojas C.M."/>
            <person name="Teiling C."/>
            <person name="Du L."/>
            <person name="Kapatral V."/>
            <person name="Walunas T.L."/>
            <person name="Crosson S."/>
        </authorList>
    </citation>
    <scope>NUCLEOTIDE SEQUENCE [LARGE SCALE GENOMIC DNA]</scope>
    <source>
        <strain>NA1000 / CB15N</strain>
    </source>
</reference>
<keyword id="KW-0997">Cell inner membrane</keyword>
<keyword id="KW-1003">Cell membrane</keyword>
<keyword id="KW-0472">Membrane</keyword>
<keyword id="KW-0520">NAD</keyword>
<keyword id="KW-0874">Quinone</keyword>
<keyword id="KW-1185">Reference proteome</keyword>
<keyword id="KW-1278">Translocase</keyword>
<keyword id="KW-0812">Transmembrane</keyword>
<keyword id="KW-1133">Transmembrane helix</keyword>
<keyword id="KW-0813">Transport</keyword>
<keyword id="KW-0830">Ubiquinone</keyword>
<organism>
    <name type="scientific">Caulobacter vibrioides (strain NA1000 / CB15N)</name>
    <name type="common">Caulobacter crescentus</name>
    <dbReference type="NCBI Taxonomy" id="565050"/>
    <lineage>
        <taxon>Bacteria</taxon>
        <taxon>Pseudomonadati</taxon>
        <taxon>Pseudomonadota</taxon>
        <taxon>Alphaproteobacteria</taxon>
        <taxon>Caulobacterales</taxon>
        <taxon>Caulobacteraceae</taxon>
        <taxon>Caulobacter</taxon>
    </lineage>
</organism>
<feature type="chain" id="PRO_0000390008" description="NADH-quinone oxidoreductase subunit K">
    <location>
        <begin position="1"/>
        <end position="101"/>
    </location>
</feature>
<feature type="transmembrane region" description="Helical" evidence="1">
    <location>
        <begin position="4"/>
        <end position="24"/>
    </location>
</feature>
<feature type="transmembrane region" description="Helical" evidence="1">
    <location>
        <begin position="30"/>
        <end position="50"/>
    </location>
</feature>
<feature type="transmembrane region" description="Helical" evidence="1">
    <location>
        <begin position="61"/>
        <end position="81"/>
    </location>
</feature>
<name>NUOK_CAUVN</name>